<proteinExistence type="inferred from homology"/>
<keyword id="KW-0489">Methyltransferase</keyword>
<keyword id="KW-0694">RNA-binding</keyword>
<keyword id="KW-0698">rRNA processing</keyword>
<keyword id="KW-0808">Transferase</keyword>
<keyword id="KW-0819">tRNA processing</keyword>
<name>FLPA_SACI4</name>
<accession>C3MYR2</accession>
<comment type="function">
    <text evidence="1">Involved in pre-rRNA and tRNA processing. Utilizes the methyl donor S-adenosyl-L-methionine to catalyze the site-specific 2'-hydroxyl methylation of ribose moieties in rRNA and tRNA. Site specificity is provided by a guide RNA that base pairs with the substrate. Methylation occurs at a characteristic distance from the sequence involved in base pairing with the guide RNA.</text>
</comment>
<comment type="subunit">
    <text evidence="1">Interacts with nop5. Component of box C/D small ribonucleoprotein (sRNP) particles that contain rpl7ae, FlpA and nop5, plus a guide RNA.</text>
</comment>
<comment type="similarity">
    <text evidence="1">Belongs to the methyltransferase superfamily. Fibrillarin family.</text>
</comment>
<evidence type="ECO:0000255" key="1">
    <source>
        <dbReference type="HAMAP-Rule" id="MF_00351"/>
    </source>
</evidence>
<protein>
    <recommendedName>
        <fullName evidence="1">Fibrillarin-like rRNA/tRNA 2'-O-methyltransferase</fullName>
        <ecNumber evidence="1">2.1.1.-</ecNumber>
    </recommendedName>
</protein>
<reference key="1">
    <citation type="journal article" date="2009" name="Proc. Natl. Acad. Sci. U.S.A.">
        <title>Biogeography of the Sulfolobus islandicus pan-genome.</title>
        <authorList>
            <person name="Reno M.L."/>
            <person name="Held N.L."/>
            <person name="Fields C.J."/>
            <person name="Burke P.V."/>
            <person name="Whitaker R.J."/>
        </authorList>
    </citation>
    <scope>NUCLEOTIDE SEQUENCE [LARGE SCALE GENOMIC DNA]</scope>
    <source>
        <strain>M.14.25 / Kamchatka #1</strain>
    </source>
</reference>
<gene>
    <name evidence="1" type="primary">flpA</name>
    <name type="ordered locus">M1425_1286</name>
</gene>
<feature type="chain" id="PRO_1000205344" description="Fibrillarin-like rRNA/tRNA 2'-O-methyltransferase">
    <location>
        <begin position="1"/>
        <end position="232"/>
    </location>
</feature>
<feature type="binding site" evidence="1">
    <location>
        <begin position="89"/>
        <end position="90"/>
    </location>
    <ligand>
        <name>S-adenosyl-L-methionine</name>
        <dbReference type="ChEBI" id="CHEBI:59789"/>
    </ligand>
</feature>
<feature type="binding site" evidence="1">
    <location>
        <begin position="108"/>
        <end position="109"/>
    </location>
    <ligand>
        <name>S-adenosyl-L-methionine</name>
        <dbReference type="ChEBI" id="CHEBI:59789"/>
    </ligand>
</feature>
<feature type="binding site" evidence="1">
    <location>
        <begin position="133"/>
        <end position="134"/>
    </location>
    <ligand>
        <name>S-adenosyl-L-methionine</name>
        <dbReference type="ChEBI" id="CHEBI:59789"/>
    </ligand>
</feature>
<feature type="binding site" evidence="1">
    <location>
        <begin position="153"/>
        <end position="156"/>
    </location>
    <ligand>
        <name>S-adenosyl-L-methionine</name>
        <dbReference type="ChEBI" id="CHEBI:59789"/>
    </ligand>
</feature>
<organism>
    <name type="scientific">Saccharolobus islandicus (strain M.14.25 / Kamchatka #1)</name>
    <name type="common">Sulfolobus islandicus</name>
    <dbReference type="NCBI Taxonomy" id="427317"/>
    <lineage>
        <taxon>Archaea</taxon>
        <taxon>Thermoproteota</taxon>
        <taxon>Thermoprotei</taxon>
        <taxon>Sulfolobales</taxon>
        <taxon>Sulfolobaceae</taxon>
        <taxon>Saccharolobus</taxon>
    </lineage>
</organism>
<sequence length="232" mass="26415">MSEVVTVKQTNMENIYECEFNDGSFRLCTRNLVSGFNVYGERLIKYEGVEYREWNAFRSKLAGAILKGLKTNPIRKGTKVLYLGAASGTTISHVSDIIELNGKAYGVEFSPRVVRELLLVAQRRPNIFPLLADARFPQSYKSVVENVDVLYVDIAQPDQTDIAIYNARFFLKVNGYMLLVIKARSIDVTKDPKEIYKAEVEKLENSNFETIQIINLDPYDKDHAIVLSRYKG</sequence>
<dbReference type="EC" id="2.1.1.-" evidence="1"/>
<dbReference type="EMBL" id="CP001400">
    <property type="protein sequence ID" value="ACP38041.1"/>
    <property type="molecule type" value="Genomic_DNA"/>
</dbReference>
<dbReference type="RefSeq" id="WP_012711293.1">
    <property type="nucleotide sequence ID" value="NC_012588.1"/>
</dbReference>
<dbReference type="SMR" id="C3MYR2"/>
<dbReference type="KEGG" id="sia:M1425_1286"/>
<dbReference type="HOGENOM" id="CLU_059055_2_0_2"/>
<dbReference type="Proteomes" id="UP000001350">
    <property type="component" value="Chromosome"/>
</dbReference>
<dbReference type="GO" id="GO:1990259">
    <property type="term" value="F:histone H2AQ104 methyltransferase activity"/>
    <property type="evidence" value="ECO:0007669"/>
    <property type="project" value="TreeGrafter"/>
</dbReference>
<dbReference type="GO" id="GO:0003723">
    <property type="term" value="F:RNA binding"/>
    <property type="evidence" value="ECO:0007669"/>
    <property type="project" value="UniProtKB-UniRule"/>
</dbReference>
<dbReference type="GO" id="GO:0008649">
    <property type="term" value="F:rRNA methyltransferase activity"/>
    <property type="evidence" value="ECO:0007669"/>
    <property type="project" value="TreeGrafter"/>
</dbReference>
<dbReference type="GO" id="GO:0000494">
    <property type="term" value="P:box C/D sno(s)RNA 3'-end processing"/>
    <property type="evidence" value="ECO:0007669"/>
    <property type="project" value="TreeGrafter"/>
</dbReference>
<dbReference type="GO" id="GO:0008033">
    <property type="term" value="P:tRNA processing"/>
    <property type="evidence" value="ECO:0007669"/>
    <property type="project" value="UniProtKB-UniRule"/>
</dbReference>
<dbReference type="CDD" id="cd02440">
    <property type="entry name" value="AdoMet_MTases"/>
    <property type="match status" value="1"/>
</dbReference>
<dbReference type="FunFam" id="3.30.200.20:FF:000613">
    <property type="entry name" value="Fibrillarin-like rRNA/tRNA 2'-O-methyltransferase"/>
    <property type="match status" value="1"/>
</dbReference>
<dbReference type="Gene3D" id="3.30.200.20">
    <property type="entry name" value="Phosphorylase Kinase, domain 1"/>
    <property type="match status" value="1"/>
</dbReference>
<dbReference type="Gene3D" id="3.40.50.150">
    <property type="entry name" value="Vaccinia Virus protein VP39"/>
    <property type="match status" value="1"/>
</dbReference>
<dbReference type="HAMAP" id="MF_00351">
    <property type="entry name" value="RNA_methyltransf_FlpA"/>
    <property type="match status" value="1"/>
</dbReference>
<dbReference type="InterPro" id="IPR000692">
    <property type="entry name" value="Fibrillarin"/>
</dbReference>
<dbReference type="InterPro" id="IPR020813">
    <property type="entry name" value="Fibrillarin_CS"/>
</dbReference>
<dbReference type="InterPro" id="IPR029063">
    <property type="entry name" value="SAM-dependent_MTases_sf"/>
</dbReference>
<dbReference type="NCBIfam" id="NF003275">
    <property type="entry name" value="PRK04266.1-1"/>
    <property type="match status" value="1"/>
</dbReference>
<dbReference type="NCBIfam" id="NF003276">
    <property type="entry name" value="PRK04266.1-2"/>
    <property type="match status" value="1"/>
</dbReference>
<dbReference type="NCBIfam" id="NF003277">
    <property type="entry name" value="PRK04266.1-3"/>
    <property type="match status" value="1"/>
</dbReference>
<dbReference type="PANTHER" id="PTHR10335:SF17">
    <property type="entry name" value="FIBRILLARIN"/>
    <property type="match status" value="1"/>
</dbReference>
<dbReference type="PANTHER" id="PTHR10335">
    <property type="entry name" value="RRNA 2-O-METHYLTRANSFERASE FIBRILLARIN"/>
    <property type="match status" value="1"/>
</dbReference>
<dbReference type="Pfam" id="PF01269">
    <property type="entry name" value="Fibrillarin"/>
    <property type="match status" value="1"/>
</dbReference>
<dbReference type="PIRSF" id="PIRSF006540">
    <property type="entry name" value="Nop17p"/>
    <property type="match status" value="1"/>
</dbReference>
<dbReference type="PRINTS" id="PR00052">
    <property type="entry name" value="FIBRILLARIN"/>
</dbReference>
<dbReference type="SMART" id="SM01206">
    <property type="entry name" value="Fibrillarin"/>
    <property type="match status" value="1"/>
</dbReference>
<dbReference type="SUPFAM" id="SSF53335">
    <property type="entry name" value="S-adenosyl-L-methionine-dependent methyltransferases"/>
    <property type="match status" value="1"/>
</dbReference>
<dbReference type="PROSITE" id="PS00566">
    <property type="entry name" value="FIBRILLARIN"/>
    <property type="match status" value="1"/>
</dbReference>